<proteinExistence type="inferred from homology"/>
<dbReference type="EC" id="4.1.2.40" evidence="1"/>
<dbReference type="EMBL" id="BX571857">
    <property type="protein sequence ID" value="CAG43901.1"/>
    <property type="molecule type" value="Genomic_DNA"/>
</dbReference>
<dbReference type="RefSeq" id="WP_000047015.1">
    <property type="nucleotide sequence ID" value="NC_002953.3"/>
</dbReference>
<dbReference type="SMR" id="Q6G7C2"/>
<dbReference type="KEGG" id="sas:SAS2093"/>
<dbReference type="HOGENOM" id="CLU_058971_0_1_9"/>
<dbReference type="UniPathway" id="UPA00704">
    <property type="reaction ID" value="UER00716"/>
</dbReference>
<dbReference type="GO" id="GO:0061595">
    <property type="term" value="F:6-deoxy-6-sulfofructose-1-phosphate aldolase activity"/>
    <property type="evidence" value="ECO:0007669"/>
    <property type="project" value="TreeGrafter"/>
</dbReference>
<dbReference type="GO" id="GO:0009024">
    <property type="term" value="F:tagatose-6-phosphate kinase activity"/>
    <property type="evidence" value="ECO:0007669"/>
    <property type="project" value="InterPro"/>
</dbReference>
<dbReference type="GO" id="GO:0009025">
    <property type="term" value="F:tagatose-bisphosphate aldolase activity"/>
    <property type="evidence" value="ECO:0007669"/>
    <property type="project" value="UniProtKB-UniRule"/>
</dbReference>
<dbReference type="GO" id="GO:1902777">
    <property type="term" value="P:6-sulfoquinovose(1-) catabolic process"/>
    <property type="evidence" value="ECO:0007669"/>
    <property type="project" value="TreeGrafter"/>
</dbReference>
<dbReference type="GO" id="GO:2001059">
    <property type="term" value="P:D-tagatose 6-phosphate catabolic process"/>
    <property type="evidence" value="ECO:0007669"/>
    <property type="project" value="UniProtKB-UniRule"/>
</dbReference>
<dbReference type="GO" id="GO:0019512">
    <property type="term" value="P:lactose catabolic process via tagatose-6-phosphate"/>
    <property type="evidence" value="ECO:0007669"/>
    <property type="project" value="InterPro"/>
</dbReference>
<dbReference type="FunFam" id="3.20.20.70:FF:000137">
    <property type="entry name" value="Tagatose 1,6-diphosphate aldolase 2"/>
    <property type="match status" value="1"/>
</dbReference>
<dbReference type="Gene3D" id="3.20.20.70">
    <property type="entry name" value="Aldolase class I"/>
    <property type="match status" value="1"/>
</dbReference>
<dbReference type="HAMAP" id="MF_00734">
    <property type="entry name" value="LacD"/>
    <property type="match status" value="1"/>
</dbReference>
<dbReference type="InterPro" id="IPR013785">
    <property type="entry name" value="Aldolase_TIM"/>
</dbReference>
<dbReference type="InterPro" id="IPR002915">
    <property type="entry name" value="DeoC/FbaB/LacD_aldolase"/>
</dbReference>
<dbReference type="InterPro" id="IPR050552">
    <property type="entry name" value="LacD_aldolase"/>
</dbReference>
<dbReference type="InterPro" id="IPR005927">
    <property type="entry name" value="Tag_1.6-dipho_adolase"/>
</dbReference>
<dbReference type="NCBIfam" id="TIGR01232">
    <property type="entry name" value="lacD"/>
    <property type="match status" value="1"/>
</dbReference>
<dbReference type="NCBIfam" id="NF003180">
    <property type="entry name" value="PRK04161.1"/>
    <property type="match status" value="1"/>
</dbReference>
<dbReference type="NCBIfam" id="NF009065">
    <property type="entry name" value="PRK12399.1"/>
    <property type="match status" value="1"/>
</dbReference>
<dbReference type="NCBIfam" id="NF009498">
    <property type="entry name" value="PRK12858.1"/>
    <property type="match status" value="1"/>
</dbReference>
<dbReference type="PANTHER" id="PTHR39340">
    <property type="entry name" value="SULFOFRUCTOSEPHOSPHATE ALDOLASE"/>
    <property type="match status" value="1"/>
</dbReference>
<dbReference type="PANTHER" id="PTHR39340:SF1">
    <property type="entry name" value="SULFOFRUCTOSEPHOSPHATE ALDOLASE"/>
    <property type="match status" value="1"/>
</dbReference>
<dbReference type="Pfam" id="PF01791">
    <property type="entry name" value="DeoC"/>
    <property type="match status" value="1"/>
</dbReference>
<dbReference type="SMART" id="SM01133">
    <property type="entry name" value="DeoC"/>
    <property type="match status" value="1"/>
</dbReference>
<dbReference type="SUPFAM" id="SSF51569">
    <property type="entry name" value="Aldolase"/>
    <property type="match status" value="1"/>
</dbReference>
<accession>Q6G7C2</accession>
<gene>
    <name evidence="1" type="primary">lacD</name>
    <name type="ordered locus">SAS2093</name>
</gene>
<feature type="chain" id="PRO_0000203948" description="Tagatose 1,6-diphosphate aldolase">
    <location>
        <begin position="1"/>
        <end position="326"/>
    </location>
</feature>
<comment type="catalytic activity">
    <reaction evidence="1">
        <text>D-tagatofuranose 1,6-bisphosphate = D-glyceraldehyde 3-phosphate + dihydroxyacetone phosphate</text>
        <dbReference type="Rhea" id="RHEA:22948"/>
        <dbReference type="ChEBI" id="CHEBI:57642"/>
        <dbReference type="ChEBI" id="CHEBI:58694"/>
        <dbReference type="ChEBI" id="CHEBI:59776"/>
        <dbReference type="EC" id="4.1.2.40"/>
    </reaction>
</comment>
<comment type="pathway">
    <text evidence="1">Carbohydrate metabolism; D-tagatose 6-phosphate degradation; D-glyceraldehyde 3-phosphate and glycerone phosphate from D-tagatose 6-phosphate: step 2/2.</text>
</comment>
<comment type="similarity">
    <text evidence="1">Belongs to the aldolase LacD family.</text>
</comment>
<name>LACD_STAAS</name>
<sequence>MSKSNQKIASIEQLSNNEGIISALAFDQRGALKRMMAKHQTEEPTVAQIEQLKVLVAEELTQYASSILLDPEYGLPASDARNKDCGLLLAYEKTGYDVNAKGRLPDCLVEWSAKRLKEQGANAVKFLLYYDVDDAEEINIQKKAYIERIGSECVAEDIPFFLEVLTYDDNIPDNGSVEFAKVKPRKVNEAMKLFSEPRFNVDVLKVEVPVNMKYVEGFAEGEVVYTKEEAAQHFKNQDAATHLPYIYLSAGVSAELFQETLKFAHEAGAKFNGVLCGRATWSGAVQVYIEQGEDAAREWLRTTGFKNIDDLNKVLKDTATSWKQRK</sequence>
<keyword id="KW-0423">Lactose metabolism</keyword>
<keyword id="KW-0456">Lyase</keyword>
<reference key="1">
    <citation type="journal article" date="2004" name="Proc. Natl. Acad. Sci. U.S.A.">
        <title>Complete genomes of two clinical Staphylococcus aureus strains: evidence for the rapid evolution of virulence and drug resistance.</title>
        <authorList>
            <person name="Holden M.T.G."/>
            <person name="Feil E.J."/>
            <person name="Lindsay J.A."/>
            <person name="Peacock S.J."/>
            <person name="Day N.P.J."/>
            <person name="Enright M.C."/>
            <person name="Foster T.J."/>
            <person name="Moore C.E."/>
            <person name="Hurst L."/>
            <person name="Atkin R."/>
            <person name="Barron A."/>
            <person name="Bason N."/>
            <person name="Bentley S.D."/>
            <person name="Chillingworth C."/>
            <person name="Chillingworth T."/>
            <person name="Churcher C."/>
            <person name="Clark L."/>
            <person name="Corton C."/>
            <person name="Cronin A."/>
            <person name="Doggett J."/>
            <person name="Dowd L."/>
            <person name="Feltwell T."/>
            <person name="Hance Z."/>
            <person name="Harris B."/>
            <person name="Hauser H."/>
            <person name="Holroyd S."/>
            <person name="Jagels K."/>
            <person name="James K.D."/>
            <person name="Lennard N."/>
            <person name="Line A."/>
            <person name="Mayes R."/>
            <person name="Moule S."/>
            <person name="Mungall K."/>
            <person name="Ormond D."/>
            <person name="Quail M.A."/>
            <person name="Rabbinowitsch E."/>
            <person name="Rutherford K.M."/>
            <person name="Sanders M."/>
            <person name="Sharp S."/>
            <person name="Simmonds M."/>
            <person name="Stevens K."/>
            <person name="Whitehead S."/>
            <person name="Barrell B.G."/>
            <person name="Spratt B.G."/>
            <person name="Parkhill J."/>
        </authorList>
    </citation>
    <scope>NUCLEOTIDE SEQUENCE [LARGE SCALE GENOMIC DNA]</scope>
    <source>
        <strain>MSSA476</strain>
    </source>
</reference>
<organism>
    <name type="scientific">Staphylococcus aureus (strain MSSA476)</name>
    <dbReference type="NCBI Taxonomy" id="282459"/>
    <lineage>
        <taxon>Bacteria</taxon>
        <taxon>Bacillati</taxon>
        <taxon>Bacillota</taxon>
        <taxon>Bacilli</taxon>
        <taxon>Bacillales</taxon>
        <taxon>Staphylococcaceae</taxon>
        <taxon>Staphylococcus</taxon>
    </lineage>
</organism>
<evidence type="ECO:0000255" key="1">
    <source>
        <dbReference type="HAMAP-Rule" id="MF_00734"/>
    </source>
</evidence>
<protein>
    <recommendedName>
        <fullName evidence="1">Tagatose 1,6-diphosphate aldolase</fullName>
        <ecNumber evidence="1">4.1.2.40</ecNumber>
    </recommendedName>
    <alternativeName>
        <fullName evidence="1">D-tagatose-1,6-bisphosphate aldolase</fullName>
    </alternativeName>
    <alternativeName>
        <fullName evidence="1">Tagatose-bisphosphate aldolase</fullName>
    </alternativeName>
</protein>